<gene>
    <name evidence="1" type="primary">efp</name>
    <name type="ordered locus">CT0159</name>
</gene>
<proteinExistence type="inferred from homology"/>
<protein>
    <recommendedName>
        <fullName evidence="1">Elongation factor P</fullName>
        <shortName evidence="1">EF-P</shortName>
    </recommendedName>
</protein>
<sequence>MVSISNVSRGAIIRWNGAPHSIESLVHRTPGNLRAFYQASMKNLKTGRNVEYRFSATEQVDVIVTERKKYQYLYRDGEDYVMMDTETFDQINVPEVAIGPASRFLKDSVMVDIVFADDGSILEVELPTFVELEVTETSPASKDDRATSGTKPAIVETGAEVNVPMFIQTGSIIRIDTRSGEYMERVKK</sequence>
<feature type="chain" id="PRO_0000094231" description="Elongation factor P">
    <location>
        <begin position="1"/>
        <end position="188"/>
    </location>
</feature>
<dbReference type="EMBL" id="AE006470">
    <property type="protein sequence ID" value="AAM71407.1"/>
    <property type="molecule type" value="Genomic_DNA"/>
</dbReference>
<dbReference type="RefSeq" id="NP_661065.1">
    <property type="nucleotide sequence ID" value="NC_002932.3"/>
</dbReference>
<dbReference type="RefSeq" id="WP_010931853.1">
    <property type="nucleotide sequence ID" value="NC_002932.3"/>
</dbReference>
<dbReference type="SMR" id="Q8KG11"/>
<dbReference type="STRING" id="194439.CT0159"/>
<dbReference type="EnsemblBacteria" id="AAM71407">
    <property type="protein sequence ID" value="AAM71407"/>
    <property type="gene ID" value="CT0159"/>
</dbReference>
<dbReference type="KEGG" id="cte:CT0159"/>
<dbReference type="PATRIC" id="fig|194439.7.peg.156"/>
<dbReference type="eggNOG" id="COG0231">
    <property type="taxonomic scope" value="Bacteria"/>
</dbReference>
<dbReference type="HOGENOM" id="CLU_074944_0_1_10"/>
<dbReference type="OrthoDB" id="9801844at2"/>
<dbReference type="UniPathway" id="UPA00345"/>
<dbReference type="Proteomes" id="UP000001007">
    <property type="component" value="Chromosome"/>
</dbReference>
<dbReference type="GO" id="GO:0005737">
    <property type="term" value="C:cytoplasm"/>
    <property type="evidence" value="ECO:0007669"/>
    <property type="project" value="UniProtKB-SubCell"/>
</dbReference>
<dbReference type="GO" id="GO:0003746">
    <property type="term" value="F:translation elongation factor activity"/>
    <property type="evidence" value="ECO:0007669"/>
    <property type="project" value="UniProtKB-UniRule"/>
</dbReference>
<dbReference type="GO" id="GO:0043043">
    <property type="term" value="P:peptide biosynthetic process"/>
    <property type="evidence" value="ECO:0007669"/>
    <property type="project" value="InterPro"/>
</dbReference>
<dbReference type="CDD" id="cd04470">
    <property type="entry name" value="S1_EF-P_repeat_1"/>
    <property type="match status" value="1"/>
</dbReference>
<dbReference type="CDD" id="cd05794">
    <property type="entry name" value="S1_EF-P_repeat_2"/>
    <property type="match status" value="1"/>
</dbReference>
<dbReference type="FunFam" id="2.40.50.140:FF:000004">
    <property type="entry name" value="Elongation factor P"/>
    <property type="match status" value="1"/>
</dbReference>
<dbReference type="FunFam" id="2.40.50.140:FF:000009">
    <property type="entry name" value="Elongation factor P"/>
    <property type="match status" value="1"/>
</dbReference>
<dbReference type="Gene3D" id="2.30.30.30">
    <property type="match status" value="1"/>
</dbReference>
<dbReference type="Gene3D" id="2.40.50.140">
    <property type="entry name" value="Nucleic acid-binding proteins"/>
    <property type="match status" value="2"/>
</dbReference>
<dbReference type="HAMAP" id="MF_00141">
    <property type="entry name" value="EF_P"/>
    <property type="match status" value="1"/>
</dbReference>
<dbReference type="InterPro" id="IPR015365">
    <property type="entry name" value="Elong-fact-P_C"/>
</dbReference>
<dbReference type="InterPro" id="IPR012340">
    <property type="entry name" value="NA-bd_OB-fold"/>
</dbReference>
<dbReference type="InterPro" id="IPR014722">
    <property type="entry name" value="Rib_uL2_dom2"/>
</dbReference>
<dbReference type="InterPro" id="IPR020599">
    <property type="entry name" value="Transl_elong_fac_P/YeiP"/>
</dbReference>
<dbReference type="InterPro" id="IPR013185">
    <property type="entry name" value="Transl_elong_KOW-like"/>
</dbReference>
<dbReference type="InterPro" id="IPR001059">
    <property type="entry name" value="Transl_elong_P/YeiP_cen"/>
</dbReference>
<dbReference type="InterPro" id="IPR013852">
    <property type="entry name" value="Transl_elong_P/YeiP_CS"/>
</dbReference>
<dbReference type="InterPro" id="IPR011768">
    <property type="entry name" value="Transl_elongation_fac_P"/>
</dbReference>
<dbReference type="InterPro" id="IPR008991">
    <property type="entry name" value="Translation_prot_SH3-like_sf"/>
</dbReference>
<dbReference type="NCBIfam" id="TIGR00038">
    <property type="entry name" value="efp"/>
    <property type="match status" value="1"/>
</dbReference>
<dbReference type="NCBIfam" id="NF001810">
    <property type="entry name" value="PRK00529.1"/>
    <property type="match status" value="1"/>
</dbReference>
<dbReference type="PANTHER" id="PTHR30053">
    <property type="entry name" value="ELONGATION FACTOR P"/>
    <property type="match status" value="1"/>
</dbReference>
<dbReference type="PANTHER" id="PTHR30053:SF12">
    <property type="entry name" value="ELONGATION FACTOR P (EF-P) FAMILY PROTEIN"/>
    <property type="match status" value="1"/>
</dbReference>
<dbReference type="Pfam" id="PF01132">
    <property type="entry name" value="EFP"/>
    <property type="match status" value="1"/>
</dbReference>
<dbReference type="Pfam" id="PF08207">
    <property type="entry name" value="EFP_N"/>
    <property type="match status" value="1"/>
</dbReference>
<dbReference type="Pfam" id="PF09285">
    <property type="entry name" value="Elong-fact-P_C"/>
    <property type="match status" value="1"/>
</dbReference>
<dbReference type="PIRSF" id="PIRSF005901">
    <property type="entry name" value="EF-P"/>
    <property type="match status" value="1"/>
</dbReference>
<dbReference type="SMART" id="SM01185">
    <property type="entry name" value="EFP"/>
    <property type="match status" value="1"/>
</dbReference>
<dbReference type="SMART" id="SM00841">
    <property type="entry name" value="Elong-fact-P_C"/>
    <property type="match status" value="1"/>
</dbReference>
<dbReference type="SUPFAM" id="SSF50249">
    <property type="entry name" value="Nucleic acid-binding proteins"/>
    <property type="match status" value="2"/>
</dbReference>
<dbReference type="SUPFAM" id="SSF50104">
    <property type="entry name" value="Translation proteins SH3-like domain"/>
    <property type="match status" value="1"/>
</dbReference>
<dbReference type="PROSITE" id="PS01275">
    <property type="entry name" value="EFP"/>
    <property type="match status" value="1"/>
</dbReference>
<keyword id="KW-0963">Cytoplasm</keyword>
<keyword id="KW-0251">Elongation factor</keyword>
<keyword id="KW-0648">Protein biosynthesis</keyword>
<keyword id="KW-1185">Reference proteome</keyword>
<accession>Q8KG11</accession>
<name>EFP_CHLTE</name>
<reference key="1">
    <citation type="journal article" date="2002" name="Proc. Natl. Acad. Sci. U.S.A.">
        <title>The complete genome sequence of Chlorobium tepidum TLS, a photosynthetic, anaerobic, green-sulfur bacterium.</title>
        <authorList>
            <person name="Eisen J.A."/>
            <person name="Nelson K.E."/>
            <person name="Paulsen I.T."/>
            <person name="Heidelberg J.F."/>
            <person name="Wu M."/>
            <person name="Dodson R.J."/>
            <person name="DeBoy R.T."/>
            <person name="Gwinn M.L."/>
            <person name="Nelson W.C."/>
            <person name="Haft D.H."/>
            <person name="Hickey E.K."/>
            <person name="Peterson J.D."/>
            <person name="Durkin A.S."/>
            <person name="Kolonay J.F."/>
            <person name="Yang F."/>
            <person name="Holt I.E."/>
            <person name="Umayam L.A."/>
            <person name="Mason T.M."/>
            <person name="Brenner M."/>
            <person name="Shea T.P."/>
            <person name="Parksey D.S."/>
            <person name="Nierman W.C."/>
            <person name="Feldblyum T.V."/>
            <person name="Hansen C.L."/>
            <person name="Craven M.B."/>
            <person name="Radune D."/>
            <person name="Vamathevan J.J."/>
            <person name="Khouri H.M."/>
            <person name="White O."/>
            <person name="Gruber T.M."/>
            <person name="Ketchum K.A."/>
            <person name="Venter J.C."/>
            <person name="Tettelin H."/>
            <person name="Bryant D.A."/>
            <person name="Fraser C.M."/>
        </authorList>
    </citation>
    <scope>NUCLEOTIDE SEQUENCE [LARGE SCALE GENOMIC DNA]</scope>
    <source>
        <strain>ATCC 49652 / DSM 12025 / NBRC 103806 / TLS</strain>
    </source>
</reference>
<comment type="function">
    <text evidence="1">Involved in peptide bond synthesis. Stimulates efficient translation and peptide-bond synthesis on native or reconstituted 70S ribosomes in vitro. Probably functions indirectly by altering the affinity of the ribosome for aminoacyl-tRNA, thus increasing their reactivity as acceptors for peptidyl transferase.</text>
</comment>
<comment type="pathway">
    <text evidence="1">Protein biosynthesis; polypeptide chain elongation.</text>
</comment>
<comment type="subcellular location">
    <subcellularLocation>
        <location evidence="1">Cytoplasm</location>
    </subcellularLocation>
</comment>
<comment type="similarity">
    <text evidence="1">Belongs to the elongation factor P family.</text>
</comment>
<organism>
    <name type="scientific">Chlorobaculum tepidum (strain ATCC 49652 / DSM 12025 / NBRC 103806 / TLS)</name>
    <name type="common">Chlorobium tepidum</name>
    <dbReference type="NCBI Taxonomy" id="194439"/>
    <lineage>
        <taxon>Bacteria</taxon>
        <taxon>Pseudomonadati</taxon>
        <taxon>Chlorobiota</taxon>
        <taxon>Chlorobiia</taxon>
        <taxon>Chlorobiales</taxon>
        <taxon>Chlorobiaceae</taxon>
        <taxon>Chlorobaculum</taxon>
    </lineage>
</organism>
<evidence type="ECO:0000255" key="1">
    <source>
        <dbReference type="HAMAP-Rule" id="MF_00141"/>
    </source>
</evidence>